<proteinExistence type="inferred from homology"/>
<feature type="chain" id="PRO_0000217615" description="Photosystem I assembly protein Ycf4">
    <location>
        <begin position="1"/>
        <end position="184"/>
    </location>
</feature>
<feature type="transmembrane region" description="Helical" evidence="1">
    <location>
        <begin position="19"/>
        <end position="39"/>
    </location>
</feature>
<feature type="transmembrane region" description="Helical" evidence="1">
    <location>
        <begin position="57"/>
        <end position="77"/>
    </location>
</feature>
<organism>
    <name type="scientific">Nymphaea alba</name>
    <name type="common">White water-lily</name>
    <name type="synonym">Castalia alba</name>
    <dbReference type="NCBI Taxonomy" id="34301"/>
    <lineage>
        <taxon>Eukaryota</taxon>
        <taxon>Viridiplantae</taxon>
        <taxon>Streptophyta</taxon>
        <taxon>Embryophyta</taxon>
        <taxon>Tracheophyta</taxon>
        <taxon>Spermatophyta</taxon>
        <taxon>Magnoliopsida</taxon>
        <taxon>Nymphaeales</taxon>
        <taxon>Nymphaeaceae</taxon>
        <taxon>Nymphaea</taxon>
    </lineage>
</organism>
<keyword id="KW-0150">Chloroplast</keyword>
<keyword id="KW-0472">Membrane</keyword>
<keyword id="KW-0602">Photosynthesis</keyword>
<keyword id="KW-0934">Plastid</keyword>
<keyword id="KW-0793">Thylakoid</keyword>
<keyword id="KW-0812">Transmembrane</keyword>
<keyword id="KW-1133">Transmembrane helix</keyword>
<name>YCF4_NYMAL</name>
<dbReference type="EMBL" id="AJ627251">
    <property type="protein sequence ID" value="CAF28604.1"/>
    <property type="molecule type" value="Genomic_DNA"/>
</dbReference>
<dbReference type="RefSeq" id="YP_053166.1">
    <property type="nucleotide sequence ID" value="NC_006050.1"/>
</dbReference>
<dbReference type="GeneID" id="2896250"/>
<dbReference type="GO" id="GO:0009535">
    <property type="term" value="C:chloroplast thylakoid membrane"/>
    <property type="evidence" value="ECO:0007669"/>
    <property type="project" value="UniProtKB-SubCell"/>
</dbReference>
<dbReference type="GO" id="GO:0009522">
    <property type="term" value="C:photosystem I"/>
    <property type="evidence" value="ECO:0007669"/>
    <property type="project" value="InterPro"/>
</dbReference>
<dbReference type="GO" id="GO:0015979">
    <property type="term" value="P:photosynthesis"/>
    <property type="evidence" value="ECO:0007669"/>
    <property type="project" value="UniProtKB-UniRule"/>
</dbReference>
<dbReference type="HAMAP" id="MF_00437">
    <property type="entry name" value="Ycf4"/>
    <property type="match status" value="1"/>
</dbReference>
<dbReference type="InterPro" id="IPR003359">
    <property type="entry name" value="PSI_Ycf4_assembly"/>
</dbReference>
<dbReference type="PANTHER" id="PTHR33288">
    <property type="match status" value="1"/>
</dbReference>
<dbReference type="PANTHER" id="PTHR33288:SF4">
    <property type="entry name" value="PHOTOSYSTEM I ASSEMBLY PROTEIN YCF4"/>
    <property type="match status" value="1"/>
</dbReference>
<dbReference type="Pfam" id="PF02392">
    <property type="entry name" value="Ycf4"/>
    <property type="match status" value="1"/>
</dbReference>
<protein>
    <recommendedName>
        <fullName evidence="1">Photosystem I assembly protein Ycf4</fullName>
    </recommendedName>
</protein>
<comment type="function">
    <text evidence="1">Seems to be required for the assembly of the photosystem I complex.</text>
</comment>
<comment type="subcellular location">
    <subcellularLocation>
        <location evidence="1">Plastid</location>
        <location evidence="1">Chloroplast thylakoid membrane</location>
        <topology evidence="1">Multi-pass membrane protein</topology>
    </subcellularLocation>
</comment>
<comment type="similarity">
    <text evidence="1">Belongs to the Ycf4 family.</text>
</comment>
<accession>Q6EW42</accession>
<sequence length="184" mass="21494">MNWRSEHIWIELITGSRKISNFCWACILFLGSLGFLLVGTSSYFGRNLISLFPSQQIVFFPQGIVMCFYGIAGLFISSYLWCTISWSVGSGYDKFDRKEGIVCIFRWGFPGRNRRIFFRFRIRDIRSIRIEVKEGLFPRRVLYMEIGGRGDIPLTRTDENLTPREIEQKAAESAYFLRVPIEVF</sequence>
<geneLocation type="chloroplast"/>
<gene>
    <name evidence="1" type="primary">ycf4</name>
</gene>
<evidence type="ECO:0000255" key="1">
    <source>
        <dbReference type="HAMAP-Rule" id="MF_00437"/>
    </source>
</evidence>
<reference key="1">
    <citation type="journal article" date="2004" name="Mol. Biol. Evol.">
        <title>The chloroplast genome of Nymphaea alba: whole-genome analyses and the problem of identifying the most basal angiosperm.</title>
        <authorList>
            <person name="Goremykin V.V."/>
            <person name="Hirsch-Ernst K.I."/>
            <person name="Woelfl S."/>
            <person name="Hellwig F.H."/>
        </authorList>
    </citation>
    <scope>NUCLEOTIDE SEQUENCE [LARGE SCALE GENOMIC DNA]</scope>
</reference>